<keyword id="KW-1003">Cell membrane</keyword>
<keyword id="KW-0963">Cytoplasm</keyword>
<keyword id="KW-0472">Membrane</keyword>
<keyword id="KW-0653">Protein transport</keyword>
<keyword id="KW-1185">Reference proteome</keyword>
<keyword id="KW-0811">Translocation</keyword>
<keyword id="KW-0812">Transmembrane</keyword>
<keyword id="KW-1133">Transmembrane helix</keyword>
<keyword id="KW-0813">Transport</keyword>
<organism>
    <name type="scientific">Haloferax volcanii (strain ATCC 29605 / DSM 3757 / JCM 8879 / NBRC 14742 / NCIMB 2012 / VKM B-1768 / DS2)</name>
    <name type="common">Halobacterium volcanii</name>
    <dbReference type="NCBI Taxonomy" id="309800"/>
    <lineage>
        <taxon>Archaea</taxon>
        <taxon>Methanobacteriati</taxon>
        <taxon>Methanobacteriota</taxon>
        <taxon>Stenosarchaea group</taxon>
        <taxon>Halobacteria</taxon>
        <taxon>Halobacteriales</taxon>
        <taxon>Haloferacaceae</taxon>
        <taxon>Haloferax</taxon>
    </lineage>
</organism>
<name>TATAO_HALVD</name>
<proteinExistence type="evidence at protein level"/>
<evidence type="ECO:0000255" key="1">
    <source>
        <dbReference type="HAMAP-Rule" id="MF_00236"/>
    </source>
</evidence>
<evidence type="ECO:0000256" key="2">
    <source>
        <dbReference type="SAM" id="MobiDB-lite"/>
    </source>
</evidence>
<evidence type="ECO:0000269" key="3">
    <source>
    </source>
</evidence>
<evidence type="ECO:0000305" key="4">
    <source>
    </source>
</evidence>
<gene>
    <name evidence="1" type="primary">tatAo</name>
    <name type="ordered locus">HVO_1027</name>
</gene>
<accession>D4GVK4</accession>
<protein>
    <recommendedName>
        <fullName evidence="1">Sec-independent protein translocase protein TatAo</fullName>
    </recommendedName>
</protein>
<sequence length="90" mass="9583">MLDSIPLFPGLPGGPELLIVLLIVVLLFGANKLPQLARSSGQAMGEFRRGREEIEEELKKGAEGGDDEGENGDEAEADDADATETEAESR</sequence>
<dbReference type="EMBL" id="CP001956">
    <property type="protein sequence ID" value="ADE04997.1"/>
    <property type="molecule type" value="Genomic_DNA"/>
</dbReference>
<dbReference type="RefSeq" id="WP_004043915.1">
    <property type="nucleotide sequence ID" value="NC_013967.1"/>
</dbReference>
<dbReference type="SMR" id="D4GVK4"/>
<dbReference type="STRING" id="309800.HVO_1027"/>
<dbReference type="TCDB" id="2.A.64.1.6">
    <property type="family name" value="the twin arginine targeting (tat) family"/>
</dbReference>
<dbReference type="PaxDb" id="309800-C498_13624"/>
<dbReference type="EnsemblBacteria" id="ADE04997">
    <property type="protein sequence ID" value="ADE04997"/>
    <property type="gene ID" value="HVO_1027"/>
</dbReference>
<dbReference type="GeneID" id="8924188"/>
<dbReference type="KEGG" id="hvo:HVO_1027"/>
<dbReference type="eggNOG" id="arCOG02694">
    <property type="taxonomic scope" value="Archaea"/>
</dbReference>
<dbReference type="HOGENOM" id="CLU_086034_3_3_2"/>
<dbReference type="Proteomes" id="UP000008243">
    <property type="component" value="Chromosome"/>
</dbReference>
<dbReference type="GO" id="GO:0005737">
    <property type="term" value="C:cytoplasm"/>
    <property type="evidence" value="ECO:0007669"/>
    <property type="project" value="UniProtKB-SubCell"/>
</dbReference>
<dbReference type="GO" id="GO:0033281">
    <property type="term" value="C:TAT protein transport complex"/>
    <property type="evidence" value="ECO:0007669"/>
    <property type="project" value="UniProtKB-UniRule"/>
</dbReference>
<dbReference type="GO" id="GO:0008320">
    <property type="term" value="F:protein transmembrane transporter activity"/>
    <property type="evidence" value="ECO:0007669"/>
    <property type="project" value="UniProtKB-UniRule"/>
</dbReference>
<dbReference type="GO" id="GO:0043953">
    <property type="term" value="P:protein transport by the Tat complex"/>
    <property type="evidence" value="ECO:0007669"/>
    <property type="project" value="UniProtKB-UniRule"/>
</dbReference>
<dbReference type="Gene3D" id="1.20.5.3310">
    <property type="match status" value="1"/>
</dbReference>
<dbReference type="HAMAP" id="MF_00236">
    <property type="entry name" value="TatA_E"/>
    <property type="match status" value="1"/>
</dbReference>
<dbReference type="InterPro" id="IPR003369">
    <property type="entry name" value="TatA/B/E"/>
</dbReference>
<dbReference type="InterPro" id="IPR006312">
    <property type="entry name" value="TatA/E"/>
</dbReference>
<dbReference type="NCBIfam" id="TIGR01411">
    <property type="entry name" value="tatAE"/>
    <property type="match status" value="1"/>
</dbReference>
<dbReference type="PANTHER" id="PTHR42982">
    <property type="entry name" value="SEC-INDEPENDENT PROTEIN TRANSLOCASE PROTEIN TATA"/>
    <property type="match status" value="1"/>
</dbReference>
<dbReference type="PANTHER" id="PTHR42982:SF1">
    <property type="entry name" value="SEC-INDEPENDENT PROTEIN TRANSLOCASE PROTEIN TATA"/>
    <property type="match status" value="1"/>
</dbReference>
<dbReference type="Pfam" id="PF02416">
    <property type="entry name" value="TatA_B_E"/>
    <property type="match status" value="1"/>
</dbReference>
<comment type="function">
    <text evidence="4">Part of the twin-arginine translocation (Tat) system that transports large folded proteins containing a characteristic twin-arginine motif in their signal peptide across membranes. TatA could form the protein-conducting channel of the Tat system (Probable).</text>
</comment>
<comment type="subunit">
    <text evidence="1 3">Forms a complex with TatC (By similarity). Cytoplasmic and membrane-bound TatA form high-molecular-weight complexes.</text>
</comment>
<comment type="subcellular location">
    <subcellularLocation>
        <location evidence="1 3">Cell membrane</location>
        <topology evidence="1 3">Single-pass membrane protein</topology>
    </subcellularLocation>
    <subcellularLocation>
        <location evidence="3">Cytoplasm</location>
    </subcellularLocation>
</comment>
<comment type="miscellaneous">
    <text evidence="4">H.volcanii possesses two TatA translocases: TatAo and TatAt. Each may interact with specific Tat substrates (PubMed:16291683).</text>
</comment>
<comment type="similarity">
    <text evidence="1">Belongs to the TatA/E family.</text>
</comment>
<reference key="1">
    <citation type="journal article" date="2010" name="PLoS ONE">
        <title>The complete genome sequence of Haloferax volcanii DS2, a model archaeon.</title>
        <authorList>
            <person name="Hartman A.L."/>
            <person name="Norais C."/>
            <person name="Badger J.H."/>
            <person name="Delmas S."/>
            <person name="Haldenby S."/>
            <person name="Madupu R."/>
            <person name="Robinson J."/>
            <person name="Khouri H."/>
            <person name="Ren Q."/>
            <person name="Lowe T.M."/>
            <person name="Maupin-Furlow J."/>
            <person name="Pohlschroder M."/>
            <person name="Daniels C."/>
            <person name="Pfeiffer F."/>
            <person name="Allers T."/>
            <person name="Eisen J.A."/>
        </authorList>
    </citation>
    <scope>NUCLEOTIDE SEQUENCE [LARGE SCALE GENOMIC DNA]</scope>
    <source>
        <strain>ATCC 29605 / DSM 3757 / JCM 8879 / NBRC 14742 / NCIMB 2012 / VKM B-1768 / DS2</strain>
    </source>
</reference>
<reference key="2">
    <citation type="journal article" date="2005" name="J. Bacteriol.">
        <title>Genetic and biochemical analysis of the twin-arginine translocation pathway in halophilic archaea.</title>
        <authorList>
            <person name="Dilks K."/>
            <person name="Gimenez M.I."/>
            <person name="Pohlschroder M."/>
        </authorList>
    </citation>
    <scope>FUNCTION</scope>
    <scope>SUBUNIT</scope>
    <scope>SUBCELLULAR LOCATION</scope>
    <source>
        <strain>DS2 / DS70 / H99</strain>
    </source>
</reference>
<feature type="chain" id="PRO_0000417358" description="Sec-independent protein translocase protein TatAo">
    <location>
        <begin position="1"/>
        <end position="90"/>
    </location>
</feature>
<feature type="transmembrane region" description="Helical" evidence="1">
    <location>
        <begin position="8"/>
        <end position="28"/>
    </location>
</feature>
<feature type="region of interest" description="Disordered" evidence="2">
    <location>
        <begin position="39"/>
        <end position="90"/>
    </location>
</feature>
<feature type="compositionally biased region" description="Basic and acidic residues" evidence="2">
    <location>
        <begin position="46"/>
        <end position="63"/>
    </location>
</feature>
<feature type="compositionally biased region" description="Acidic residues" evidence="2">
    <location>
        <begin position="64"/>
        <end position="90"/>
    </location>
</feature>